<geneLocation type="chloroplast"/>
<comment type="function">
    <text evidence="1">Found at the monomer-monomer interface of the photosystem II (PS II) dimer, plays a role in assembly and dimerization of PSII. PSII is a light-driven water plastoquinone oxidoreductase, using light energy to abstract electrons from H(2)O, generating a proton gradient subsequently used for ATP formation.</text>
</comment>
<comment type="subunit">
    <text evidence="1">PSII is composed of 1 copy each of membrane proteins PsbA, PsbB, PsbC, PsbD, PsbE, PsbF, PsbH, PsbI, PsbJ, PsbK, PsbL, PsbM, PsbT, PsbY, PsbZ, Psb30/Ycf12, at least 3 peripheral proteins of the oxygen-evolving complex and a large number of cofactors. It forms dimeric complexes.</text>
</comment>
<comment type="subcellular location">
    <subcellularLocation>
        <location evidence="1">Plastid</location>
        <location evidence="1">Chloroplast thylakoid membrane</location>
        <topology evidence="1">Single-pass membrane protein</topology>
    </subcellularLocation>
</comment>
<comment type="similarity">
    <text evidence="1">Belongs to the PsbT family.</text>
</comment>
<feature type="chain" id="PRO_0000217975" description="Photosystem II reaction center protein T">
    <location>
        <begin position="1"/>
        <end position="33"/>
    </location>
</feature>
<feature type="transmembrane region" description="Helical" evidence="1">
    <location>
        <begin position="3"/>
        <end position="23"/>
    </location>
</feature>
<gene>
    <name evidence="1" type="primary">psbT</name>
</gene>
<keyword id="KW-0150">Chloroplast</keyword>
<keyword id="KW-0472">Membrane</keyword>
<keyword id="KW-0602">Photosynthesis</keyword>
<keyword id="KW-0604">Photosystem II</keyword>
<keyword id="KW-0934">Plastid</keyword>
<keyword id="KW-0793">Thylakoid</keyword>
<keyword id="KW-0812">Transmembrane</keyword>
<keyword id="KW-1133">Transmembrane helix</keyword>
<evidence type="ECO:0000255" key="1">
    <source>
        <dbReference type="HAMAP-Rule" id="MF_00808"/>
    </source>
</evidence>
<reference key="1">
    <citation type="journal article" date="2004" name="DNA Res.">
        <title>Complete nucleotide sequence of the sugarcane (Saccharum officinarum) chloroplast genome: a comparative analysis of four monocot chloroplast genomes.</title>
        <authorList>
            <person name="Asano T."/>
            <person name="Tsudzuki T."/>
            <person name="Takahashi S."/>
            <person name="Shimada H."/>
            <person name="Kadowaki K."/>
        </authorList>
    </citation>
    <scope>NUCLEOTIDE SEQUENCE [LARGE SCALE GENOMIC DNA]</scope>
</reference>
<dbReference type="EMBL" id="AP006714">
    <property type="protein sequence ID" value="BAD27319.1"/>
    <property type="molecule type" value="Genomic_DNA"/>
</dbReference>
<dbReference type="RefSeq" id="YP_009389597.1">
    <property type="nucleotide sequence ID" value="NC_035224.1"/>
</dbReference>
<dbReference type="SMR" id="Q6ENT7"/>
<dbReference type="GeneID" id="33347810"/>
<dbReference type="GO" id="GO:0009535">
    <property type="term" value="C:chloroplast thylakoid membrane"/>
    <property type="evidence" value="ECO:0007669"/>
    <property type="project" value="UniProtKB-SubCell"/>
</dbReference>
<dbReference type="GO" id="GO:0009539">
    <property type="term" value="C:photosystem II reaction center"/>
    <property type="evidence" value="ECO:0007669"/>
    <property type="project" value="InterPro"/>
</dbReference>
<dbReference type="GO" id="GO:0015979">
    <property type="term" value="P:photosynthesis"/>
    <property type="evidence" value="ECO:0007669"/>
    <property type="project" value="UniProtKB-UniRule"/>
</dbReference>
<dbReference type="HAMAP" id="MF_00808">
    <property type="entry name" value="PSII_PsbT"/>
    <property type="match status" value="1"/>
</dbReference>
<dbReference type="InterPro" id="IPR001743">
    <property type="entry name" value="PSII_PsbT"/>
</dbReference>
<dbReference type="InterPro" id="IPR037268">
    <property type="entry name" value="PSII_PsbT_sf"/>
</dbReference>
<dbReference type="PANTHER" id="PTHR36411">
    <property type="match status" value="1"/>
</dbReference>
<dbReference type="PANTHER" id="PTHR36411:SF2">
    <property type="entry name" value="PHOTOSYSTEM II REACTION CENTER PROTEIN T"/>
    <property type="match status" value="1"/>
</dbReference>
<dbReference type="Pfam" id="PF01405">
    <property type="entry name" value="PsbT"/>
    <property type="match status" value="1"/>
</dbReference>
<dbReference type="SUPFAM" id="SSF161029">
    <property type="entry name" value="Photosystem II reaction center protein T, PsbT"/>
    <property type="match status" value="1"/>
</dbReference>
<accession>Q6ENT7</accession>
<name>PSBT_SACOF</name>
<protein>
    <recommendedName>
        <fullName evidence="1">Photosystem II reaction center protein T</fullName>
        <shortName evidence="1">PSII-T</shortName>
    </recommendedName>
</protein>
<sequence length="33" mass="3818">MEALVYTFLLVSTLGIIFFAIFFREPPKVPTKK</sequence>
<proteinExistence type="inferred from homology"/>
<organism>
    <name type="scientific">Saccharum officinarum</name>
    <name type="common">Sugarcane</name>
    <dbReference type="NCBI Taxonomy" id="4547"/>
    <lineage>
        <taxon>Eukaryota</taxon>
        <taxon>Viridiplantae</taxon>
        <taxon>Streptophyta</taxon>
        <taxon>Embryophyta</taxon>
        <taxon>Tracheophyta</taxon>
        <taxon>Spermatophyta</taxon>
        <taxon>Magnoliopsida</taxon>
        <taxon>Liliopsida</taxon>
        <taxon>Poales</taxon>
        <taxon>Poaceae</taxon>
        <taxon>PACMAD clade</taxon>
        <taxon>Panicoideae</taxon>
        <taxon>Andropogonodae</taxon>
        <taxon>Andropogoneae</taxon>
        <taxon>Saccharinae</taxon>
        <taxon>Saccharum</taxon>
        <taxon>Saccharum officinarum species complex</taxon>
    </lineage>
</organism>